<feature type="chain" id="PRO_0000347594" description="Alanine--tRNA ligase">
    <location>
        <begin position="1"/>
        <end position="875"/>
    </location>
</feature>
<feature type="binding site" evidence="1">
    <location>
        <position position="564"/>
    </location>
    <ligand>
        <name>Zn(2+)</name>
        <dbReference type="ChEBI" id="CHEBI:29105"/>
    </ligand>
</feature>
<feature type="binding site" evidence="1">
    <location>
        <position position="568"/>
    </location>
    <ligand>
        <name>Zn(2+)</name>
        <dbReference type="ChEBI" id="CHEBI:29105"/>
    </ligand>
</feature>
<feature type="binding site" evidence="1">
    <location>
        <position position="666"/>
    </location>
    <ligand>
        <name>Zn(2+)</name>
        <dbReference type="ChEBI" id="CHEBI:29105"/>
    </ligand>
</feature>
<feature type="binding site" evidence="1">
    <location>
        <position position="670"/>
    </location>
    <ligand>
        <name>Zn(2+)</name>
        <dbReference type="ChEBI" id="CHEBI:29105"/>
    </ligand>
</feature>
<organism>
    <name type="scientific">Enterobacter sp. (strain 638)</name>
    <dbReference type="NCBI Taxonomy" id="399742"/>
    <lineage>
        <taxon>Bacteria</taxon>
        <taxon>Pseudomonadati</taxon>
        <taxon>Pseudomonadota</taxon>
        <taxon>Gammaproteobacteria</taxon>
        <taxon>Enterobacterales</taxon>
        <taxon>Enterobacteriaceae</taxon>
        <taxon>Enterobacter</taxon>
    </lineage>
</organism>
<proteinExistence type="inferred from homology"/>
<reference key="1">
    <citation type="journal article" date="2010" name="PLoS Genet.">
        <title>Genome sequence of the plant growth promoting endophytic bacterium Enterobacter sp. 638.</title>
        <authorList>
            <person name="Taghavi S."/>
            <person name="van der Lelie D."/>
            <person name="Hoffman A."/>
            <person name="Zhang Y.B."/>
            <person name="Walla M.D."/>
            <person name="Vangronsveld J."/>
            <person name="Newman L."/>
            <person name="Monchy S."/>
        </authorList>
    </citation>
    <scope>NUCLEOTIDE SEQUENCE [LARGE SCALE GENOMIC DNA]</scope>
    <source>
        <strain>638</strain>
    </source>
</reference>
<comment type="function">
    <text evidence="1">Catalyzes the attachment of alanine to tRNA(Ala) in a two-step reaction: alanine is first activated by ATP to form Ala-AMP and then transferred to the acceptor end of tRNA(Ala). Also edits incorrectly charged Ser-tRNA(Ala) and Gly-tRNA(Ala) via its editing domain.</text>
</comment>
<comment type="catalytic activity">
    <reaction evidence="1">
        <text>tRNA(Ala) + L-alanine + ATP = L-alanyl-tRNA(Ala) + AMP + diphosphate</text>
        <dbReference type="Rhea" id="RHEA:12540"/>
        <dbReference type="Rhea" id="RHEA-COMP:9657"/>
        <dbReference type="Rhea" id="RHEA-COMP:9923"/>
        <dbReference type="ChEBI" id="CHEBI:30616"/>
        <dbReference type="ChEBI" id="CHEBI:33019"/>
        <dbReference type="ChEBI" id="CHEBI:57972"/>
        <dbReference type="ChEBI" id="CHEBI:78442"/>
        <dbReference type="ChEBI" id="CHEBI:78497"/>
        <dbReference type="ChEBI" id="CHEBI:456215"/>
        <dbReference type="EC" id="6.1.1.7"/>
    </reaction>
</comment>
<comment type="cofactor">
    <cofactor evidence="1">
        <name>Zn(2+)</name>
        <dbReference type="ChEBI" id="CHEBI:29105"/>
    </cofactor>
    <text evidence="1">Binds 1 zinc ion per subunit.</text>
</comment>
<comment type="subunit">
    <text evidence="1">Homotetramer.</text>
</comment>
<comment type="subcellular location">
    <subcellularLocation>
        <location evidence="1">Cytoplasm</location>
    </subcellularLocation>
</comment>
<comment type="domain">
    <text evidence="1">Consists of three domains; the N-terminal catalytic domain, the editing domain and the C-terminal C-Ala domain. The editing domain removes incorrectly charged amino acids, while the C-Ala domain, along with tRNA(Ala), serves as a bridge to cooperatively bring together the editing and aminoacylation centers thus stimulating deacylation of misacylated tRNAs.</text>
</comment>
<comment type="similarity">
    <text evidence="1">Belongs to the class-II aminoacyl-tRNA synthetase family.</text>
</comment>
<name>SYA_ENT38</name>
<keyword id="KW-0030">Aminoacyl-tRNA synthetase</keyword>
<keyword id="KW-0067">ATP-binding</keyword>
<keyword id="KW-0963">Cytoplasm</keyword>
<keyword id="KW-0436">Ligase</keyword>
<keyword id="KW-0479">Metal-binding</keyword>
<keyword id="KW-0547">Nucleotide-binding</keyword>
<keyword id="KW-0648">Protein biosynthesis</keyword>
<keyword id="KW-0694">RNA-binding</keyword>
<keyword id="KW-0820">tRNA-binding</keyword>
<keyword id="KW-0862">Zinc</keyword>
<gene>
    <name evidence="1" type="primary">alaS</name>
    <name type="ordered locus">Ent638_3172</name>
</gene>
<accession>A4WDQ6</accession>
<protein>
    <recommendedName>
        <fullName evidence="1">Alanine--tRNA ligase</fullName>
        <ecNumber evidence="1">6.1.1.7</ecNumber>
    </recommendedName>
    <alternativeName>
        <fullName evidence="1">Alanyl-tRNA synthetase</fullName>
        <shortName evidence="1">AlaRS</shortName>
    </alternativeName>
</protein>
<evidence type="ECO:0000255" key="1">
    <source>
        <dbReference type="HAMAP-Rule" id="MF_00036"/>
    </source>
</evidence>
<sequence>MSKSTAEIRQAFLDFFHSKGHQVVASSSLVPNNDPTLLFTNAGMNQFKDVFLGLDKRNYSRATTSQRCVRAGGKHNDLENVGYTARHHTFFEMLGNFSFGDYFKHDAIQYAWELLTGENWFNLPKERLWVTVYETDDEAYEIWEKEVGIPRERIIRIGDNKGAPYASDNFWQMGDTGPCGPCTEIFYDHGDHIWGGPPGTAEEDGDRYIEIWNIVFMQFNRQIDGTMEPLPKPSVDTGMGLERIAAVLQHVNSNYDIDLFSTLIKSVAEVTGATDLSNKSLRVIADHIRSCAFLIADGVIPSNENRGYVLRRIIRRAVRHGNMLGAKDTFFYKLVGPLVGVMGDAGEELKRQQSQVEQVLKTEEEQFARTLERGLALLDEELSQLTGDTLDGETAFRLYDTYGFPVDLTADVCRERNIKVDEAGFEAAMEEQRRRARESSGFGADYNAMIRVDSASEFQGYDRLELNAKVTALFVDGKAVDSISAGQDAVVVLDKTPFYAESGGQVGDKGELKGNGFSFAVSDTQKYGQAIGHIGKLASGSLKVGEGVQAEVDEARRERIRLNHSATHLMHAALRDVLGTHVAQKGSLVNDKILRFDFSHFEAMKPSEIRAVEDMVNAQIRRNLPIETNIMDLEAARAKGAMALFGEKYDERVRVLSMGDFSTELCGGTHASRTGDIGLFRILSESGTAAGVRRIEAVTGEGAIASLHAESDQLHDIAQLLKGDSHNLGEKVRSALERSRQLEKELQQLKEQAAVQESANLSSKAVDIKGVKLLVSELAGVEPKMLRTMVDDLKNQLGSTIIVLATAVDGKVSLIAGVSKDVTDRVKAGELIGMVAQQVGGKGGGRPDMAQAGGTDAAALPAALASVESWVSAKL</sequence>
<dbReference type="EC" id="6.1.1.7" evidence="1"/>
<dbReference type="EMBL" id="CP000653">
    <property type="protein sequence ID" value="ABP61836.1"/>
    <property type="molecule type" value="Genomic_DNA"/>
</dbReference>
<dbReference type="RefSeq" id="WP_015960165.1">
    <property type="nucleotide sequence ID" value="NC_009436.1"/>
</dbReference>
<dbReference type="SMR" id="A4WDQ6"/>
<dbReference type="STRING" id="399742.Ent638_3172"/>
<dbReference type="KEGG" id="ent:Ent638_3172"/>
<dbReference type="eggNOG" id="COG0013">
    <property type="taxonomic scope" value="Bacteria"/>
</dbReference>
<dbReference type="HOGENOM" id="CLU_004485_1_1_6"/>
<dbReference type="OrthoDB" id="9803884at2"/>
<dbReference type="Proteomes" id="UP000000230">
    <property type="component" value="Chromosome"/>
</dbReference>
<dbReference type="GO" id="GO:0005829">
    <property type="term" value="C:cytosol"/>
    <property type="evidence" value="ECO:0007669"/>
    <property type="project" value="TreeGrafter"/>
</dbReference>
<dbReference type="GO" id="GO:0004813">
    <property type="term" value="F:alanine-tRNA ligase activity"/>
    <property type="evidence" value="ECO:0007669"/>
    <property type="project" value="UniProtKB-UniRule"/>
</dbReference>
<dbReference type="GO" id="GO:0002161">
    <property type="term" value="F:aminoacyl-tRNA deacylase activity"/>
    <property type="evidence" value="ECO:0007669"/>
    <property type="project" value="TreeGrafter"/>
</dbReference>
<dbReference type="GO" id="GO:0005524">
    <property type="term" value="F:ATP binding"/>
    <property type="evidence" value="ECO:0007669"/>
    <property type="project" value="UniProtKB-UniRule"/>
</dbReference>
<dbReference type="GO" id="GO:0000049">
    <property type="term" value="F:tRNA binding"/>
    <property type="evidence" value="ECO:0007669"/>
    <property type="project" value="UniProtKB-KW"/>
</dbReference>
<dbReference type="GO" id="GO:0008270">
    <property type="term" value="F:zinc ion binding"/>
    <property type="evidence" value="ECO:0007669"/>
    <property type="project" value="UniProtKB-UniRule"/>
</dbReference>
<dbReference type="GO" id="GO:0006419">
    <property type="term" value="P:alanyl-tRNA aminoacylation"/>
    <property type="evidence" value="ECO:0007669"/>
    <property type="project" value="UniProtKB-UniRule"/>
</dbReference>
<dbReference type="GO" id="GO:0045892">
    <property type="term" value="P:negative regulation of DNA-templated transcription"/>
    <property type="evidence" value="ECO:0007669"/>
    <property type="project" value="TreeGrafter"/>
</dbReference>
<dbReference type="CDD" id="cd00673">
    <property type="entry name" value="AlaRS_core"/>
    <property type="match status" value="1"/>
</dbReference>
<dbReference type="FunFam" id="2.40.30.130:FF:000001">
    <property type="entry name" value="Alanine--tRNA ligase"/>
    <property type="match status" value="1"/>
</dbReference>
<dbReference type="FunFam" id="3.10.310.40:FF:000001">
    <property type="entry name" value="Alanine--tRNA ligase"/>
    <property type="match status" value="1"/>
</dbReference>
<dbReference type="FunFam" id="3.30.54.20:FF:000001">
    <property type="entry name" value="Alanine--tRNA ligase"/>
    <property type="match status" value="1"/>
</dbReference>
<dbReference type="FunFam" id="3.30.930.10:FF:000004">
    <property type="entry name" value="Alanine--tRNA ligase"/>
    <property type="match status" value="1"/>
</dbReference>
<dbReference type="FunFam" id="3.30.980.10:FF:000004">
    <property type="entry name" value="Alanine--tRNA ligase, cytoplasmic"/>
    <property type="match status" value="1"/>
</dbReference>
<dbReference type="Gene3D" id="2.40.30.130">
    <property type="match status" value="1"/>
</dbReference>
<dbReference type="Gene3D" id="3.10.310.40">
    <property type="match status" value="1"/>
</dbReference>
<dbReference type="Gene3D" id="3.30.54.20">
    <property type="match status" value="1"/>
</dbReference>
<dbReference type="Gene3D" id="6.10.250.550">
    <property type="match status" value="1"/>
</dbReference>
<dbReference type="Gene3D" id="3.30.930.10">
    <property type="entry name" value="Bira Bifunctional Protein, Domain 2"/>
    <property type="match status" value="1"/>
</dbReference>
<dbReference type="Gene3D" id="3.30.980.10">
    <property type="entry name" value="Threonyl-trna Synthetase, Chain A, domain 2"/>
    <property type="match status" value="1"/>
</dbReference>
<dbReference type="HAMAP" id="MF_00036_B">
    <property type="entry name" value="Ala_tRNA_synth_B"/>
    <property type="match status" value="1"/>
</dbReference>
<dbReference type="InterPro" id="IPR045864">
    <property type="entry name" value="aa-tRNA-synth_II/BPL/LPL"/>
</dbReference>
<dbReference type="InterPro" id="IPR002318">
    <property type="entry name" value="Ala-tRNA-lgiase_IIc"/>
</dbReference>
<dbReference type="InterPro" id="IPR018162">
    <property type="entry name" value="Ala-tRNA-ligase_IIc_anticod-bd"/>
</dbReference>
<dbReference type="InterPro" id="IPR018165">
    <property type="entry name" value="Ala-tRNA-synth_IIc_core"/>
</dbReference>
<dbReference type="InterPro" id="IPR018164">
    <property type="entry name" value="Ala-tRNA-synth_IIc_N"/>
</dbReference>
<dbReference type="InterPro" id="IPR050058">
    <property type="entry name" value="Ala-tRNA_ligase"/>
</dbReference>
<dbReference type="InterPro" id="IPR023033">
    <property type="entry name" value="Ala_tRNA_ligase_euk/bac"/>
</dbReference>
<dbReference type="InterPro" id="IPR003156">
    <property type="entry name" value="DHHA1_dom"/>
</dbReference>
<dbReference type="InterPro" id="IPR018163">
    <property type="entry name" value="Thr/Ala-tRNA-synth_IIc_edit"/>
</dbReference>
<dbReference type="InterPro" id="IPR009000">
    <property type="entry name" value="Transl_B-barrel_sf"/>
</dbReference>
<dbReference type="InterPro" id="IPR012947">
    <property type="entry name" value="tRNA_SAD"/>
</dbReference>
<dbReference type="NCBIfam" id="TIGR00344">
    <property type="entry name" value="alaS"/>
    <property type="match status" value="1"/>
</dbReference>
<dbReference type="PANTHER" id="PTHR11777:SF9">
    <property type="entry name" value="ALANINE--TRNA LIGASE, CYTOPLASMIC"/>
    <property type="match status" value="1"/>
</dbReference>
<dbReference type="PANTHER" id="PTHR11777">
    <property type="entry name" value="ALANYL-TRNA SYNTHETASE"/>
    <property type="match status" value="1"/>
</dbReference>
<dbReference type="Pfam" id="PF02272">
    <property type="entry name" value="DHHA1"/>
    <property type="match status" value="1"/>
</dbReference>
<dbReference type="Pfam" id="PF01411">
    <property type="entry name" value="tRNA-synt_2c"/>
    <property type="match status" value="1"/>
</dbReference>
<dbReference type="Pfam" id="PF07973">
    <property type="entry name" value="tRNA_SAD"/>
    <property type="match status" value="1"/>
</dbReference>
<dbReference type="PRINTS" id="PR00980">
    <property type="entry name" value="TRNASYNTHALA"/>
</dbReference>
<dbReference type="SMART" id="SM00863">
    <property type="entry name" value="tRNA_SAD"/>
    <property type="match status" value="1"/>
</dbReference>
<dbReference type="SUPFAM" id="SSF55681">
    <property type="entry name" value="Class II aaRS and biotin synthetases"/>
    <property type="match status" value="1"/>
</dbReference>
<dbReference type="SUPFAM" id="SSF101353">
    <property type="entry name" value="Putative anticodon-binding domain of alanyl-tRNA synthetase (AlaRS)"/>
    <property type="match status" value="1"/>
</dbReference>
<dbReference type="SUPFAM" id="SSF55186">
    <property type="entry name" value="ThrRS/AlaRS common domain"/>
    <property type="match status" value="1"/>
</dbReference>
<dbReference type="SUPFAM" id="SSF50447">
    <property type="entry name" value="Translation proteins"/>
    <property type="match status" value="1"/>
</dbReference>
<dbReference type="PROSITE" id="PS50860">
    <property type="entry name" value="AA_TRNA_LIGASE_II_ALA"/>
    <property type="match status" value="1"/>
</dbReference>